<feature type="chain" id="PRO_0000190542" description="4-hydroxy-3-methylbut-2-en-1-yl diphosphate synthase (flavodoxin)">
    <location>
        <begin position="1"/>
        <end position="433"/>
    </location>
</feature>
<feature type="region of interest" description="Disordered" evidence="2">
    <location>
        <begin position="1"/>
        <end position="24"/>
    </location>
</feature>
<feature type="compositionally biased region" description="Polar residues" evidence="2">
    <location>
        <begin position="1"/>
        <end position="10"/>
    </location>
</feature>
<feature type="binding site" evidence="1">
    <location>
        <position position="320"/>
    </location>
    <ligand>
        <name>[4Fe-4S] cluster</name>
        <dbReference type="ChEBI" id="CHEBI:49883"/>
    </ligand>
</feature>
<feature type="binding site" evidence="1">
    <location>
        <position position="323"/>
    </location>
    <ligand>
        <name>[4Fe-4S] cluster</name>
        <dbReference type="ChEBI" id="CHEBI:49883"/>
    </ligand>
</feature>
<feature type="binding site" evidence="1">
    <location>
        <position position="366"/>
    </location>
    <ligand>
        <name>[4Fe-4S] cluster</name>
        <dbReference type="ChEBI" id="CHEBI:49883"/>
    </ligand>
</feature>
<feature type="binding site" evidence="1">
    <location>
        <position position="373"/>
    </location>
    <ligand>
        <name>[4Fe-4S] cluster</name>
        <dbReference type="ChEBI" id="CHEBI:49883"/>
    </ligand>
</feature>
<accession>Q7WHN0</accession>
<comment type="function">
    <text evidence="1">Converts 2C-methyl-D-erythritol 2,4-cyclodiphosphate (ME-2,4cPP) into 1-hydroxy-2-methyl-2-(E)-butenyl 4-diphosphate.</text>
</comment>
<comment type="catalytic activity">
    <reaction evidence="1">
        <text>(2E)-4-hydroxy-3-methylbut-2-enyl diphosphate + oxidized [flavodoxin] + H2O + 2 H(+) = 2-C-methyl-D-erythritol 2,4-cyclic diphosphate + reduced [flavodoxin]</text>
        <dbReference type="Rhea" id="RHEA:43604"/>
        <dbReference type="Rhea" id="RHEA-COMP:10622"/>
        <dbReference type="Rhea" id="RHEA-COMP:10623"/>
        <dbReference type="ChEBI" id="CHEBI:15377"/>
        <dbReference type="ChEBI" id="CHEBI:15378"/>
        <dbReference type="ChEBI" id="CHEBI:57618"/>
        <dbReference type="ChEBI" id="CHEBI:58210"/>
        <dbReference type="ChEBI" id="CHEBI:58483"/>
        <dbReference type="ChEBI" id="CHEBI:128753"/>
        <dbReference type="EC" id="1.17.7.3"/>
    </reaction>
</comment>
<comment type="cofactor">
    <cofactor evidence="1">
        <name>[4Fe-4S] cluster</name>
        <dbReference type="ChEBI" id="CHEBI:49883"/>
    </cofactor>
    <text evidence="1">Binds 1 [4Fe-4S] cluster.</text>
</comment>
<comment type="pathway">
    <text evidence="1">Isoprenoid biosynthesis; isopentenyl diphosphate biosynthesis via DXP pathway; isopentenyl diphosphate from 1-deoxy-D-xylulose 5-phosphate: step 5/6.</text>
</comment>
<comment type="similarity">
    <text evidence="1">Belongs to the IspG family.</text>
</comment>
<proteinExistence type="inferred from homology"/>
<name>ISPG_BORBR</name>
<dbReference type="EC" id="1.17.7.3" evidence="1"/>
<dbReference type="EMBL" id="BX640446">
    <property type="protein sequence ID" value="CAE33668.1"/>
    <property type="molecule type" value="Genomic_DNA"/>
</dbReference>
<dbReference type="RefSeq" id="WP_003810695.1">
    <property type="nucleotide sequence ID" value="NC_002927.3"/>
</dbReference>
<dbReference type="SMR" id="Q7WHN0"/>
<dbReference type="GeneID" id="93204642"/>
<dbReference type="KEGG" id="bbr:BB3176"/>
<dbReference type="eggNOG" id="COG0821">
    <property type="taxonomic scope" value="Bacteria"/>
</dbReference>
<dbReference type="HOGENOM" id="CLU_042258_1_0_4"/>
<dbReference type="UniPathway" id="UPA00056">
    <property type="reaction ID" value="UER00096"/>
</dbReference>
<dbReference type="Proteomes" id="UP000001027">
    <property type="component" value="Chromosome"/>
</dbReference>
<dbReference type="GO" id="GO:0051539">
    <property type="term" value="F:4 iron, 4 sulfur cluster binding"/>
    <property type="evidence" value="ECO:0007669"/>
    <property type="project" value="UniProtKB-UniRule"/>
</dbReference>
<dbReference type="GO" id="GO:0046429">
    <property type="term" value="F:4-hydroxy-3-methylbut-2-en-1-yl diphosphate synthase activity (ferredoxin)"/>
    <property type="evidence" value="ECO:0007669"/>
    <property type="project" value="UniProtKB-UniRule"/>
</dbReference>
<dbReference type="GO" id="GO:0141197">
    <property type="term" value="F:4-hydroxy-3-methylbut-2-enyl-diphosphate synthase activity (flavodoxin)"/>
    <property type="evidence" value="ECO:0007669"/>
    <property type="project" value="UniProtKB-EC"/>
</dbReference>
<dbReference type="GO" id="GO:0005506">
    <property type="term" value="F:iron ion binding"/>
    <property type="evidence" value="ECO:0007669"/>
    <property type="project" value="InterPro"/>
</dbReference>
<dbReference type="GO" id="GO:0019288">
    <property type="term" value="P:isopentenyl diphosphate biosynthetic process, methylerythritol 4-phosphate pathway"/>
    <property type="evidence" value="ECO:0007669"/>
    <property type="project" value="UniProtKB-UniRule"/>
</dbReference>
<dbReference type="GO" id="GO:0016114">
    <property type="term" value="P:terpenoid biosynthetic process"/>
    <property type="evidence" value="ECO:0007669"/>
    <property type="project" value="InterPro"/>
</dbReference>
<dbReference type="FunFam" id="3.30.413.10:FF:000012">
    <property type="entry name" value="4-hydroxy-3-methylbut-2-en-1-yl diphosphate synthase (flavodoxin)"/>
    <property type="match status" value="1"/>
</dbReference>
<dbReference type="Gene3D" id="3.20.20.20">
    <property type="entry name" value="Dihydropteroate synthase-like"/>
    <property type="match status" value="1"/>
</dbReference>
<dbReference type="Gene3D" id="3.30.413.10">
    <property type="entry name" value="Sulfite Reductase Hemoprotein, domain 1"/>
    <property type="match status" value="1"/>
</dbReference>
<dbReference type="HAMAP" id="MF_00159">
    <property type="entry name" value="IspG"/>
    <property type="match status" value="1"/>
</dbReference>
<dbReference type="InterPro" id="IPR011005">
    <property type="entry name" value="Dihydropteroate_synth-like_sf"/>
</dbReference>
<dbReference type="InterPro" id="IPR016425">
    <property type="entry name" value="IspG_bac"/>
</dbReference>
<dbReference type="InterPro" id="IPR004588">
    <property type="entry name" value="IspG_bac-typ"/>
</dbReference>
<dbReference type="InterPro" id="IPR045854">
    <property type="entry name" value="NO2/SO3_Rdtase_4Fe4S_sf"/>
</dbReference>
<dbReference type="NCBIfam" id="TIGR00612">
    <property type="entry name" value="ispG_gcpE"/>
    <property type="match status" value="1"/>
</dbReference>
<dbReference type="NCBIfam" id="NF001540">
    <property type="entry name" value="PRK00366.1"/>
    <property type="match status" value="1"/>
</dbReference>
<dbReference type="PANTHER" id="PTHR30454">
    <property type="entry name" value="4-HYDROXY-3-METHYLBUT-2-EN-1-YL DIPHOSPHATE SYNTHASE"/>
    <property type="match status" value="1"/>
</dbReference>
<dbReference type="PANTHER" id="PTHR30454:SF0">
    <property type="entry name" value="4-HYDROXY-3-METHYLBUT-2-EN-1-YL DIPHOSPHATE SYNTHASE (FERREDOXIN), CHLOROPLASTIC"/>
    <property type="match status" value="1"/>
</dbReference>
<dbReference type="Pfam" id="PF04551">
    <property type="entry name" value="GcpE"/>
    <property type="match status" value="1"/>
</dbReference>
<dbReference type="PIRSF" id="PIRSF004640">
    <property type="entry name" value="IspG"/>
    <property type="match status" value="1"/>
</dbReference>
<dbReference type="SUPFAM" id="SSF56014">
    <property type="entry name" value="Nitrite and sulphite reductase 4Fe-4S domain-like"/>
    <property type="match status" value="1"/>
</dbReference>
<protein>
    <recommendedName>
        <fullName evidence="1">4-hydroxy-3-methylbut-2-en-1-yl diphosphate synthase (flavodoxin)</fullName>
        <ecNumber evidence="1">1.17.7.3</ecNumber>
    </recommendedName>
    <alternativeName>
        <fullName evidence="1">1-hydroxy-2-methyl-2-(E)-butenyl 4-diphosphate synthase</fullName>
    </alternativeName>
</protein>
<organism>
    <name type="scientific">Bordetella bronchiseptica (strain ATCC BAA-588 / NCTC 13252 / RB50)</name>
    <name type="common">Alcaligenes bronchisepticus</name>
    <dbReference type="NCBI Taxonomy" id="257310"/>
    <lineage>
        <taxon>Bacteria</taxon>
        <taxon>Pseudomonadati</taxon>
        <taxon>Pseudomonadota</taxon>
        <taxon>Betaproteobacteria</taxon>
        <taxon>Burkholderiales</taxon>
        <taxon>Alcaligenaceae</taxon>
        <taxon>Bordetella</taxon>
    </lineage>
</organism>
<sequence length="433" mass="46949">MRYMQDSSMPCQDASPPDVGAAPRRATRAVRVQWGGRTVTVGGNASVVVQSMTNTDTADAVATAIQVKELAQAGSEIVRITVNTPEAAREVAAIREQLDRMGVEVPLVGDFHYNGHKLLTQFPECAQALSKYRINPGNMGGGKRRDDNFAQMIEVACRHDKPVRIGVNWGSLDHELMARKMDENSRRAQPWEAQAVMRDALVVSAISNARRAEELGLRSDAIVLSCKVSHVQDLIAVYRDLSARCDYPLHLGLTEAGMGSKGIVASTAALAVLLQEGIGDTIRISLTPEPGGDRTREVIVAQEILQTMGLRAFTPMVVACPGCGRTSSTFFQELADSIQSFLRRQMPLWRTRYPGVESMNVAVMGCVVNGPGESRHADIGISLPGTGEVPAAPVFIDGERTVTLKGDHIAEEFQAIVEDYVARRYGAGITHQE</sequence>
<evidence type="ECO:0000255" key="1">
    <source>
        <dbReference type="HAMAP-Rule" id="MF_00159"/>
    </source>
</evidence>
<evidence type="ECO:0000256" key="2">
    <source>
        <dbReference type="SAM" id="MobiDB-lite"/>
    </source>
</evidence>
<reference key="1">
    <citation type="journal article" date="2003" name="Nat. Genet.">
        <title>Comparative analysis of the genome sequences of Bordetella pertussis, Bordetella parapertussis and Bordetella bronchiseptica.</title>
        <authorList>
            <person name="Parkhill J."/>
            <person name="Sebaihia M."/>
            <person name="Preston A."/>
            <person name="Murphy L.D."/>
            <person name="Thomson N.R."/>
            <person name="Harris D.E."/>
            <person name="Holden M.T.G."/>
            <person name="Churcher C.M."/>
            <person name="Bentley S.D."/>
            <person name="Mungall K.L."/>
            <person name="Cerdeno-Tarraga A.-M."/>
            <person name="Temple L."/>
            <person name="James K.D."/>
            <person name="Harris B."/>
            <person name="Quail M.A."/>
            <person name="Achtman M."/>
            <person name="Atkin R."/>
            <person name="Baker S."/>
            <person name="Basham D."/>
            <person name="Bason N."/>
            <person name="Cherevach I."/>
            <person name="Chillingworth T."/>
            <person name="Collins M."/>
            <person name="Cronin A."/>
            <person name="Davis P."/>
            <person name="Doggett J."/>
            <person name="Feltwell T."/>
            <person name="Goble A."/>
            <person name="Hamlin N."/>
            <person name="Hauser H."/>
            <person name="Holroyd S."/>
            <person name="Jagels K."/>
            <person name="Leather S."/>
            <person name="Moule S."/>
            <person name="Norberczak H."/>
            <person name="O'Neil S."/>
            <person name="Ormond D."/>
            <person name="Price C."/>
            <person name="Rabbinowitsch E."/>
            <person name="Rutter S."/>
            <person name="Sanders M."/>
            <person name="Saunders D."/>
            <person name="Seeger K."/>
            <person name="Sharp S."/>
            <person name="Simmonds M."/>
            <person name="Skelton J."/>
            <person name="Squares R."/>
            <person name="Squares S."/>
            <person name="Stevens K."/>
            <person name="Unwin L."/>
            <person name="Whitehead S."/>
            <person name="Barrell B.G."/>
            <person name="Maskell D.J."/>
        </authorList>
    </citation>
    <scope>NUCLEOTIDE SEQUENCE [LARGE SCALE GENOMIC DNA]</scope>
    <source>
        <strain>ATCC BAA-588 / NCTC 13252 / RB50</strain>
    </source>
</reference>
<gene>
    <name evidence="1" type="primary">ispG</name>
    <name type="synonym">gcpE</name>
    <name type="ordered locus">BB3176</name>
</gene>
<keyword id="KW-0004">4Fe-4S</keyword>
<keyword id="KW-0408">Iron</keyword>
<keyword id="KW-0411">Iron-sulfur</keyword>
<keyword id="KW-0414">Isoprene biosynthesis</keyword>
<keyword id="KW-0479">Metal-binding</keyword>
<keyword id="KW-0560">Oxidoreductase</keyword>